<proteinExistence type="inferred from homology"/>
<accession>C3PLF5</accession>
<evidence type="ECO:0000250" key="1"/>
<evidence type="ECO:0000255" key="2">
    <source>
        <dbReference type="HAMAP-Rule" id="MF_00103"/>
    </source>
</evidence>
<feature type="initiator methionine" description="Removed" evidence="1">
    <location>
        <position position="1"/>
    </location>
</feature>
<feature type="chain" id="PRO_1000202829" description="Formamidopyrimidine-DNA glycosylase">
    <location>
        <begin position="2"/>
        <end position="273"/>
    </location>
</feature>
<feature type="zinc finger region" description="FPG-type" evidence="2">
    <location>
        <begin position="238"/>
        <end position="272"/>
    </location>
</feature>
<feature type="active site" description="Schiff-base intermediate with DNA" evidence="2">
    <location>
        <position position="2"/>
    </location>
</feature>
<feature type="active site" description="Proton donor" evidence="2">
    <location>
        <position position="3"/>
    </location>
</feature>
<feature type="active site" description="Proton donor; for beta-elimination activity" evidence="2">
    <location>
        <position position="58"/>
    </location>
</feature>
<feature type="active site" description="Proton donor; for delta-elimination activity" evidence="2">
    <location>
        <position position="262"/>
    </location>
</feature>
<feature type="binding site" evidence="2">
    <location>
        <position position="92"/>
    </location>
    <ligand>
        <name>DNA</name>
        <dbReference type="ChEBI" id="CHEBI:16991"/>
    </ligand>
</feature>
<feature type="binding site" evidence="2">
    <location>
        <position position="111"/>
    </location>
    <ligand>
        <name>DNA</name>
        <dbReference type="ChEBI" id="CHEBI:16991"/>
    </ligand>
</feature>
<feature type="binding site" evidence="2">
    <location>
        <position position="153"/>
    </location>
    <ligand>
        <name>DNA</name>
        <dbReference type="ChEBI" id="CHEBI:16991"/>
    </ligand>
</feature>
<protein>
    <recommendedName>
        <fullName evidence="2">Formamidopyrimidine-DNA glycosylase</fullName>
        <shortName evidence="2">Fapy-DNA glycosylase</shortName>
        <ecNumber evidence="2">3.2.2.23</ecNumber>
    </recommendedName>
    <alternativeName>
        <fullName evidence="2">DNA-(apurinic or apyrimidinic site) lyase MutM</fullName>
        <shortName evidence="2">AP lyase MutM</shortName>
        <ecNumber evidence="2">4.2.99.18</ecNumber>
    </alternativeName>
</protein>
<keyword id="KW-0227">DNA damage</keyword>
<keyword id="KW-0234">DNA repair</keyword>
<keyword id="KW-0238">DNA-binding</keyword>
<keyword id="KW-0326">Glycosidase</keyword>
<keyword id="KW-0378">Hydrolase</keyword>
<keyword id="KW-0456">Lyase</keyword>
<keyword id="KW-0479">Metal-binding</keyword>
<keyword id="KW-0511">Multifunctional enzyme</keyword>
<keyword id="KW-0862">Zinc</keyword>
<keyword id="KW-0863">Zinc-finger</keyword>
<gene>
    <name evidence="2" type="primary">mutM</name>
    <name evidence="2" type="synonym">fpg</name>
    <name type="ordered locus">RAF_ORF0942</name>
</gene>
<name>FPG_RICAE</name>
<sequence>MPELPEVETLKNSLKDKLIGLIIENVELKRDNLRYKLSPLLTTEILNTNILDVRRRAKYLIIDFNNDYSLIVHLGMSGRFTLQSANYKTQKHDHVIFDLSNGEKLIFNDTRRFGMIYSFKTDLLEKEFFNDLGIEPFSDLLTLEYLKDKLQTKKIPIKNLIMDNRVIVGIGNIYASESLHLARIHPDKSGNDLRDDEIENLIKAIRDVLTKAITAGGTTLKDFVNGDNKPGYFTKQLKVYGREGQSCLSCSSTIIKIKHSGRSTFYCKTCQYS</sequence>
<organism>
    <name type="scientific">Rickettsia africae (strain ESF-5)</name>
    <dbReference type="NCBI Taxonomy" id="347255"/>
    <lineage>
        <taxon>Bacteria</taxon>
        <taxon>Pseudomonadati</taxon>
        <taxon>Pseudomonadota</taxon>
        <taxon>Alphaproteobacteria</taxon>
        <taxon>Rickettsiales</taxon>
        <taxon>Rickettsiaceae</taxon>
        <taxon>Rickettsieae</taxon>
        <taxon>Rickettsia</taxon>
        <taxon>spotted fever group</taxon>
    </lineage>
</organism>
<comment type="function">
    <text evidence="2">Involved in base excision repair of DNA damaged by oxidation or by mutagenic agents. Acts as a DNA glycosylase that recognizes and removes damaged bases. Has a preference for oxidized purines, such as 7,8-dihydro-8-oxoguanine (8-oxoG). Has AP (apurinic/apyrimidinic) lyase activity and introduces nicks in the DNA strand. Cleaves the DNA backbone by beta-delta elimination to generate a single-strand break at the site of the removed base with both 3'- and 5'-phosphates.</text>
</comment>
<comment type="catalytic activity">
    <reaction evidence="2">
        <text>Hydrolysis of DNA containing ring-opened 7-methylguanine residues, releasing 2,6-diamino-4-hydroxy-5-(N-methyl)formamidopyrimidine.</text>
        <dbReference type="EC" id="3.2.2.23"/>
    </reaction>
</comment>
<comment type="catalytic activity">
    <reaction evidence="2">
        <text>2'-deoxyribonucleotide-(2'-deoxyribose 5'-phosphate)-2'-deoxyribonucleotide-DNA = a 3'-end 2'-deoxyribonucleotide-(2,3-dehydro-2,3-deoxyribose 5'-phosphate)-DNA + a 5'-end 5'-phospho-2'-deoxyribonucleoside-DNA + H(+)</text>
        <dbReference type="Rhea" id="RHEA:66592"/>
        <dbReference type="Rhea" id="RHEA-COMP:13180"/>
        <dbReference type="Rhea" id="RHEA-COMP:16897"/>
        <dbReference type="Rhea" id="RHEA-COMP:17067"/>
        <dbReference type="ChEBI" id="CHEBI:15378"/>
        <dbReference type="ChEBI" id="CHEBI:136412"/>
        <dbReference type="ChEBI" id="CHEBI:157695"/>
        <dbReference type="ChEBI" id="CHEBI:167181"/>
        <dbReference type="EC" id="4.2.99.18"/>
    </reaction>
</comment>
<comment type="cofactor">
    <cofactor evidence="2">
        <name>Zn(2+)</name>
        <dbReference type="ChEBI" id="CHEBI:29105"/>
    </cofactor>
    <text evidence="2">Binds 1 zinc ion per subunit.</text>
</comment>
<comment type="subunit">
    <text evidence="2">Monomer.</text>
</comment>
<comment type="similarity">
    <text evidence="2">Belongs to the FPG family.</text>
</comment>
<reference key="1">
    <citation type="journal article" date="2009" name="BMC Genomics">
        <title>Analysis of the Rickettsia africae genome reveals that virulence acquisition in Rickettsia species may be explained by genome reduction.</title>
        <authorList>
            <person name="Fournier P.-E."/>
            <person name="El Karkouri K."/>
            <person name="Leroy Q."/>
            <person name="Robert C."/>
            <person name="Giumelli B."/>
            <person name="Renesto P."/>
            <person name="Socolovschi C."/>
            <person name="Parola P."/>
            <person name="Audic S."/>
            <person name="Raoult D."/>
        </authorList>
    </citation>
    <scope>NUCLEOTIDE SEQUENCE [LARGE SCALE GENOMIC DNA]</scope>
    <source>
        <strain>ESF-5</strain>
    </source>
</reference>
<dbReference type="EC" id="3.2.2.23" evidence="2"/>
<dbReference type="EC" id="4.2.99.18" evidence="2"/>
<dbReference type="EMBL" id="CP001612">
    <property type="protein sequence ID" value="ACP53795.1"/>
    <property type="molecule type" value="Genomic_DNA"/>
</dbReference>
<dbReference type="RefSeq" id="WP_012719940.1">
    <property type="nucleotide sequence ID" value="NC_012633.1"/>
</dbReference>
<dbReference type="SMR" id="C3PLF5"/>
<dbReference type="KEGG" id="raf:RAF_ORF0942"/>
<dbReference type="HOGENOM" id="CLU_038423_1_1_5"/>
<dbReference type="Proteomes" id="UP000002305">
    <property type="component" value="Chromosome"/>
</dbReference>
<dbReference type="GO" id="GO:0034039">
    <property type="term" value="F:8-oxo-7,8-dihydroguanine DNA N-glycosylase activity"/>
    <property type="evidence" value="ECO:0007669"/>
    <property type="project" value="TreeGrafter"/>
</dbReference>
<dbReference type="GO" id="GO:0140078">
    <property type="term" value="F:class I DNA-(apurinic or apyrimidinic site) endonuclease activity"/>
    <property type="evidence" value="ECO:0007669"/>
    <property type="project" value="UniProtKB-EC"/>
</dbReference>
<dbReference type="GO" id="GO:0003684">
    <property type="term" value="F:damaged DNA binding"/>
    <property type="evidence" value="ECO:0007669"/>
    <property type="project" value="InterPro"/>
</dbReference>
<dbReference type="GO" id="GO:0008270">
    <property type="term" value="F:zinc ion binding"/>
    <property type="evidence" value="ECO:0007669"/>
    <property type="project" value="UniProtKB-UniRule"/>
</dbReference>
<dbReference type="GO" id="GO:0006284">
    <property type="term" value="P:base-excision repair"/>
    <property type="evidence" value="ECO:0007669"/>
    <property type="project" value="InterPro"/>
</dbReference>
<dbReference type="CDD" id="cd08966">
    <property type="entry name" value="EcFpg-like_N"/>
    <property type="match status" value="1"/>
</dbReference>
<dbReference type="FunFam" id="1.10.8.50:FF:000003">
    <property type="entry name" value="Formamidopyrimidine-DNA glycosylase"/>
    <property type="match status" value="1"/>
</dbReference>
<dbReference type="Gene3D" id="1.10.8.50">
    <property type="match status" value="1"/>
</dbReference>
<dbReference type="Gene3D" id="3.20.190.10">
    <property type="entry name" value="MutM-like, N-terminal"/>
    <property type="match status" value="1"/>
</dbReference>
<dbReference type="HAMAP" id="MF_00103">
    <property type="entry name" value="Fapy_DNA_glycosyl"/>
    <property type="match status" value="1"/>
</dbReference>
<dbReference type="InterPro" id="IPR015886">
    <property type="entry name" value="DNA_glyclase/AP_lyase_DNA-bd"/>
</dbReference>
<dbReference type="InterPro" id="IPR015887">
    <property type="entry name" value="DNA_glyclase_Znf_dom_DNA_BS"/>
</dbReference>
<dbReference type="InterPro" id="IPR020629">
    <property type="entry name" value="Formamido-pyr_DNA_Glyclase"/>
</dbReference>
<dbReference type="InterPro" id="IPR012319">
    <property type="entry name" value="FPG_cat"/>
</dbReference>
<dbReference type="InterPro" id="IPR035937">
    <property type="entry name" value="MutM-like_N-ter"/>
</dbReference>
<dbReference type="InterPro" id="IPR010979">
    <property type="entry name" value="Ribosomal_uS13-like_H2TH"/>
</dbReference>
<dbReference type="InterPro" id="IPR000214">
    <property type="entry name" value="Znf_DNA_glyclase/AP_lyase"/>
</dbReference>
<dbReference type="InterPro" id="IPR010663">
    <property type="entry name" value="Znf_FPG/IleRS"/>
</dbReference>
<dbReference type="NCBIfam" id="TIGR00577">
    <property type="entry name" value="fpg"/>
    <property type="match status" value="1"/>
</dbReference>
<dbReference type="NCBIfam" id="NF002211">
    <property type="entry name" value="PRK01103.1"/>
    <property type="match status" value="1"/>
</dbReference>
<dbReference type="PANTHER" id="PTHR22993">
    <property type="entry name" value="FORMAMIDOPYRIMIDINE-DNA GLYCOSYLASE"/>
    <property type="match status" value="1"/>
</dbReference>
<dbReference type="PANTHER" id="PTHR22993:SF9">
    <property type="entry name" value="FORMAMIDOPYRIMIDINE-DNA GLYCOSYLASE"/>
    <property type="match status" value="1"/>
</dbReference>
<dbReference type="Pfam" id="PF01149">
    <property type="entry name" value="Fapy_DNA_glyco"/>
    <property type="match status" value="1"/>
</dbReference>
<dbReference type="Pfam" id="PF06831">
    <property type="entry name" value="H2TH"/>
    <property type="match status" value="1"/>
</dbReference>
<dbReference type="Pfam" id="PF06827">
    <property type="entry name" value="zf-FPG_IleRS"/>
    <property type="match status" value="1"/>
</dbReference>
<dbReference type="SMART" id="SM00898">
    <property type="entry name" value="Fapy_DNA_glyco"/>
    <property type="match status" value="1"/>
</dbReference>
<dbReference type="SMART" id="SM01232">
    <property type="entry name" value="H2TH"/>
    <property type="match status" value="1"/>
</dbReference>
<dbReference type="SUPFAM" id="SSF57716">
    <property type="entry name" value="Glucocorticoid receptor-like (DNA-binding domain)"/>
    <property type="match status" value="1"/>
</dbReference>
<dbReference type="SUPFAM" id="SSF81624">
    <property type="entry name" value="N-terminal domain of MutM-like DNA repair proteins"/>
    <property type="match status" value="1"/>
</dbReference>
<dbReference type="SUPFAM" id="SSF46946">
    <property type="entry name" value="S13-like H2TH domain"/>
    <property type="match status" value="1"/>
</dbReference>
<dbReference type="PROSITE" id="PS51068">
    <property type="entry name" value="FPG_CAT"/>
    <property type="match status" value="1"/>
</dbReference>
<dbReference type="PROSITE" id="PS01242">
    <property type="entry name" value="ZF_FPG_1"/>
    <property type="match status" value="1"/>
</dbReference>
<dbReference type="PROSITE" id="PS51066">
    <property type="entry name" value="ZF_FPG_2"/>
    <property type="match status" value="1"/>
</dbReference>